<comment type="function">
    <text evidence="2">With S4 and S5 plays an important role in translational accuracy.</text>
</comment>
<comment type="function">
    <text evidence="2">Interacts with and stabilizes bases of the 16S rRNA that are involved in tRNA selection in the A site and with the mRNA backbone. Located at the interface of the 30S and 50S subunits, it traverses the body of the 30S subunit contacting proteins on the other side and probably holding the rRNA structure together. The combined cluster of proteins S8, S12 and S17 appears to hold together the shoulder and platform of the 30S subunit.</text>
</comment>
<comment type="subunit">
    <text evidence="2">Part of the 30S ribosomal subunit. Contacts proteins S8 and S17. May interact with IF1 in the 30S initiation complex.</text>
</comment>
<comment type="similarity">
    <text evidence="2">Belongs to the universal ribosomal protein uS12 family.</text>
</comment>
<gene>
    <name evidence="2" type="primary">rpsL</name>
    <name type="ordered locus">Dde_2263</name>
</gene>
<reference key="1">
    <citation type="journal article" date="2011" name="J. Bacteriol.">
        <title>Complete genome sequence and updated annotation of Desulfovibrio alaskensis G20.</title>
        <authorList>
            <person name="Hauser L.J."/>
            <person name="Land M.L."/>
            <person name="Brown S.D."/>
            <person name="Larimer F."/>
            <person name="Keller K.L."/>
            <person name="Rapp-Giles B.J."/>
            <person name="Price M.N."/>
            <person name="Lin M."/>
            <person name="Bruce D.C."/>
            <person name="Detter J.C."/>
            <person name="Tapia R."/>
            <person name="Han C.S."/>
            <person name="Goodwin L.A."/>
            <person name="Cheng J.F."/>
            <person name="Pitluck S."/>
            <person name="Copeland A."/>
            <person name="Lucas S."/>
            <person name="Nolan M."/>
            <person name="Lapidus A.L."/>
            <person name="Palumbo A.V."/>
            <person name="Wall J.D."/>
        </authorList>
    </citation>
    <scope>NUCLEOTIDE SEQUENCE [LARGE SCALE GENOMIC DNA]</scope>
    <source>
        <strain>ATCC BAA-1058 / DSM 17464 / G20</strain>
    </source>
</reference>
<feature type="chain" id="PRO_0000226390" description="Small ribosomal subunit protein uS12">
    <location>
        <begin position="1"/>
        <end position="123"/>
    </location>
</feature>
<feature type="region of interest" description="Disordered" evidence="3">
    <location>
        <begin position="104"/>
        <end position="123"/>
    </location>
</feature>
<feature type="compositionally biased region" description="Basic residues" evidence="3">
    <location>
        <begin position="113"/>
        <end position="123"/>
    </location>
</feature>
<feature type="modified residue" description="3-methylthioaspartic acid" evidence="1">
    <location>
        <position position="89"/>
    </location>
</feature>
<organism>
    <name type="scientific">Oleidesulfovibrio alaskensis (strain ATCC BAA-1058 / DSM 17464 / G20)</name>
    <name type="common">Desulfovibrio alaskensis</name>
    <dbReference type="NCBI Taxonomy" id="207559"/>
    <lineage>
        <taxon>Bacteria</taxon>
        <taxon>Pseudomonadati</taxon>
        <taxon>Thermodesulfobacteriota</taxon>
        <taxon>Desulfovibrionia</taxon>
        <taxon>Desulfovibrionales</taxon>
        <taxon>Desulfovibrionaceae</taxon>
        <taxon>Oleidesulfovibrio</taxon>
    </lineage>
</organism>
<dbReference type="EMBL" id="CP000112">
    <property type="protein sequence ID" value="ABB39060.1"/>
    <property type="molecule type" value="Genomic_DNA"/>
</dbReference>
<dbReference type="RefSeq" id="WP_011368148.1">
    <property type="nucleotide sequence ID" value="NC_007519.1"/>
</dbReference>
<dbReference type="SMR" id="Q30Z36"/>
<dbReference type="STRING" id="207559.Dde_2263"/>
<dbReference type="KEGG" id="dde:Dde_2263"/>
<dbReference type="eggNOG" id="COG0048">
    <property type="taxonomic scope" value="Bacteria"/>
</dbReference>
<dbReference type="HOGENOM" id="CLU_104295_1_2_7"/>
<dbReference type="Proteomes" id="UP000002710">
    <property type="component" value="Chromosome"/>
</dbReference>
<dbReference type="GO" id="GO:0015935">
    <property type="term" value="C:small ribosomal subunit"/>
    <property type="evidence" value="ECO:0007669"/>
    <property type="project" value="InterPro"/>
</dbReference>
<dbReference type="GO" id="GO:0019843">
    <property type="term" value="F:rRNA binding"/>
    <property type="evidence" value="ECO:0007669"/>
    <property type="project" value="UniProtKB-UniRule"/>
</dbReference>
<dbReference type="GO" id="GO:0003735">
    <property type="term" value="F:structural constituent of ribosome"/>
    <property type="evidence" value="ECO:0007669"/>
    <property type="project" value="InterPro"/>
</dbReference>
<dbReference type="GO" id="GO:0000049">
    <property type="term" value="F:tRNA binding"/>
    <property type="evidence" value="ECO:0007669"/>
    <property type="project" value="UniProtKB-UniRule"/>
</dbReference>
<dbReference type="GO" id="GO:0006412">
    <property type="term" value="P:translation"/>
    <property type="evidence" value="ECO:0007669"/>
    <property type="project" value="UniProtKB-UniRule"/>
</dbReference>
<dbReference type="CDD" id="cd03368">
    <property type="entry name" value="Ribosomal_S12"/>
    <property type="match status" value="1"/>
</dbReference>
<dbReference type="FunFam" id="2.40.50.140:FF:000001">
    <property type="entry name" value="30S ribosomal protein S12"/>
    <property type="match status" value="1"/>
</dbReference>
<dbReference type="Gene3D" id="2.40.50.140">
    <property type="entry name" value="Nucleic acid-binding proteins"/>
    <property type="match status" value="1"/>
</dbReference>
<dbReference type="HAMAP" id="MF_00403_B">
    <property type="entry name" value="Ribosomal_uS12_B"/>
    <property type="match status" value="1"/>
</dbReference>
<dbReference type="InterPro" id="IPR012340">
    <property type="entry name" value="NA-bd_OB-fold"/>
</dbReference>
<dbReference type="InterPro" id="IPR006032">
    <property type="entry name" value="Ribosomal_uS12"/>
</dbReference>
<dbReference type="InterPro" id="IPR005679">
    <property type="entry name" value="Ribosomal_uS12_bac"/>
</dbReference>
<dbReference type="NCBIfam" id="TIGR00981">
    <property type="entry name" value="rpsL_bact"/>
    <property type="match status" value="1"/>
</dbReference>
<dbReference type="PANTHER" id="PTHR11652">
    <property type="entry name" value="30S RIBOSOMAL PROTEIN S12 FAMILY MEMBER"/>
    <property type="match status" value="1"/>
</dbReference>
<dbReference type="Pfam" id="PF00164">
    <property type="entry name" value="Ribosom_S12_S23"/>
    <property type="match status" value="1"/>
</dbReference>
<dbReference type="PIRSF" id="PIRSF002133">
    <property type="entry name" value="Ribosomal_S12/S23"/>
    <property type="match status" value="1"/>
</dbReference>
<dbReference type="PRINTS" id="PR01034">
    <property type="entry name" value="RIBOSOMALS12"/>
</dbReference>
<dbReference type="SUPFAM" id="SSF50249">
    <property type="entry name" value="Nucleic acid-binding proteins"/>
    <property type="match status" value="1"/>
</dbReference>
<dbReference type="PROSITE" id="PS00055">
    <property type="entry name" value="RIBOSOMAL_S12"/>
    <property type="match status" value="1"/>
</dbReference>
<name>RS12_OLEA2</name>
<accession>Q30Z36</accession>
<protein>
    <recommendedName>
        <fullName evidence="2">Small ribosomal subunit protein uS12</fullName>
    </recommendedName>
    <alternativeName>
        <fullName evidence="4">30S ribosomal protein S12</fullName>
    </alternativeName>
</protein>
<evidence type="ECO:0000250" key="1"/>
<evidence type="ECO:0000255" key="2">
    <source>
        <dbReference type="HAMAP-Rule" id="MF_00403"/>
    </source>
</evidence>
<evidence type="ECO:0000256" key="3">
    <source>
        <dbReference type="SAM" id="MobiDB-lite"/>
    </source>
</evidence>
<evidence type="ECO:0000305" key="4"/>
<proteinExistence type="inferred from homology"/>
<keyword id="KW-0488">Methylation</keyword>
<keyword id="KW-1185">Reference proteome</keyword>
<keyword id="KW-0687">Ribonucleoprotein</keyword>
<keyword id="KW-0689">Ribosomal protein</keyword>
<keyword id="KW-0694">RNA-binding</keyword>
<keyword id="KW-0699">rRNA-binding</keyword>
<keyword id="KW-0820">tRNA-binding</keyword>
<sequence length="123" mass="13879">MPTINQLIRKERKKVAKRKKTPALQACPQRRGVCTRVYTTTPKKPNSALRKVARVRLTNAIEVTAYIPGEGHNLQEHSVVMIRGGRVKDLPGVRYHIVRGTLDTAGVQDRRQGRSKYGAKRPK</sequence>